<gene>
    <name evidence="5" type="primary">timm-17B.1</name>
    <name evidence="5" type="synonym">tim-17</name>
    <name evidence="5" type="synonym">timm-17</name>
    <name evidence="5" type="ORF">E04A4.5</name>
</gene>
<keyword id="KW-0472">Membrane</keyword>
<keyword id="KW-0496">Mitochondrion</keyword>
<keyword id="KW-0999">Mitochondrion inner membrane</keyword>
<keyword id="KW-0653">Protein transport</keyword>
<keyword id="KW-1185">Reference proteome</keyword>
<keyword id="KW-0811">Translocation</keyword>
<keyword id="KW-0812">Transmembrane</keyword>
<keyword id="KW-1133">Transmembrane helix</keyword>
<keyword id="KW-0813">Transport</keyword>
<organism>
    <name type="scientific">Caenorhabditis elegans</name>
    <dbReference type="NCBI Taxonomy" id="6239"/>
    <lineage>
        <taxon>Eukaryota</taxon>
        <taxon>Metazoa</taxon>
        <taxon>Ecdysozoa</taxon>
        <taxon>Nematoda</taxon>
        <taxon>Chromadorea</taxon>
        <taxon>Rhabditida</taxon>
        <taxon>Rhabditina</taxon>
        <taxon>Rhabditomorpha</taxon>
        <taxon>Rhabditoidea</taxon>
        <taxon>Rhabditidae</taxon>
        <taxon>Peloderinae</taxon>
        <taxon>Caenorhabditis</taxon>
    </lineage>
</organism>
<proteinExistence type="inferred from homology"/>
<name>T17B1_CAEEL</name>
<reference key="1">
    <citation type="journal article" date="1998" name="Science">
        <title>Genome sequence of the nematode C. elegans: a platform for investigating biology.</title>
        <authorList>
            <consortium name="The C. elegans sequencing consortium"/>
        </authorList>
    </citation>
    <scope>NUCLEOTIDE SEQUENCE [LARGE SCALE GENOMIC DNA]</scope>
    <source>
        <strain>Bristol N2</strain>
    </source>
</reference>
<accession>O44477</accession>
<feature type="chain" id="PRO_0000210289" description="Probable mitochondrial import inner membrane translocase subunit tim-17B.1">
    <location>
        <begin position="1"/>
        <end position="181"/>
    </location>
</feature>
<feature type="transmembrane region" description="Helical" evidence="2">
    <location>
        <begin position="17"/>
        <end position="37"/>
    </location>
</feature>
<feature type="transmembrane region" description="Helical" evidence="2">
    <location>
        <begin position="61"/>
        <end position="81"/>
    </location>
</feature>
<feature type="transmembrane region" description="Helical" evidence="2">
    <location>
        <begin position="109"/>
        <end position="129"/>
    </location>
</feature>
<feature type="region of interest" description="Disordered" evidence="3">
    <location>
        <begin position="137"/>
        <end position="181"/>
    </location>
</feature>
<sequence>MEEYTREPCPYRIGDDIGSAFAMGLVGGSIFQAFGGYKNAAKGKKLVGMMREVRMRSTLTGVQFAAWGGMFSTIDCCLVAIRKKEDPINSIVSGGLTGALLAIRSGPKVMAGSAILGSVILAMIEGVGLVTTRWMGAMMDPTQPPPEALDDPRSLGQKSQAEPGLDQTRPFGIPTGLPNLS</sequence>
<dbReference type="EMBL" id="FO081039">
    <property type="protein sequence ID" value="CCD68707.1"/>
    <property type="molecule type" value="Genomic_DNA"/>
</dbReference>
<dbReference type="PIR" id="T32609">
    <property type="entry name" value="T32609"/>
</dbReference>
<dbReference type="RefSeq" id="NP_500627.1">
    <property type="nucleotide sequence ID" value="NM_068226.8"/>
</dbReference>
<dbReference type="SMR" id="O44477"/>
<dbReference type="BioGRID" id="42371">
    <property type="interactions" value="4"/>
</dbReference>
<dbReference type="FunCoup" id="O44477">
    <property type="interactions" value="2019"/>
</dbReference>
<dbReference type="STRING" id="6239.E04A4.5.1"/>
<dbReference type="PaxDb" id="6239-E04A4.5"/>
<dbReference type="PeptideAtlas" id="O44477"/>
<dbReference type="EnsemblMetazoa" id="E04A4.5.1">
    <property type="protein sequence ID" value="E04A4.5.1"/>
    <property type="gene ID" value="WBGene00017119"/>
</dbReference>
<dbReference type="GeneID" id="177242"/>
<dbReference type="KEGG" id="cel:CELE_E04A4.5"/>
<dbReference type="UCSC" id="E04A4.5">
    <property type="organism name" value="c. elegans"/>
</dbReference>
<dbReference type="AGR" id="WB:WBGene00017119"/>
<dbReference type="CTD" id="177242"/>
<dbReference type="WormBase" id="E04A4.5">
    <property type="protein sequence ID" value="CE16966"/>
    <property type="gene ID" value="WBGene00017119"/>
    <property type="gene designation" value="timm-17B.1"/>
</dbReference>
<dbReference type="eggNOG" id="KOG1652">
    <property type="taxonomic scope" value="Eukaryota"/>
</dbReference>
<dbReference type="GeneTree" id="ENSGT00390000017780"/>
<dbReference type="HOGENOM" id="CLU_087811_1_1_1"/>
<dbReference type="InParanoid" id="O44477"/>
<dbReference type="OMA" id="FDCTFQY"/>
<dbReference type="OrthoDB" id="2261329at2759"/>
<dbReference type="PhylomeDB" id="O44477"/>
<dbReference type="PRO" id="PR:O44477"/>
<dbReference type="Proteomes" id="UP000001940">
    <property type="component" value="Chromosome IV"/>
</dbReference>
<dbReference type="Bgee" id="WBGene00017119">
    <property type="expression patterns" value="Expressed in pharyngeal muscle cell (C elegans) and 3 other cell types or tissues"/>
</dbReference>
<dbReference type="GO" id="GO:0005744">
    <property type="term" value="C:TIM23 mitochondrial import inner membrane translocase complex"/>
    <property type="evidence" value="ECO:0000318"/>
    <property type="project" value="GO_Central"/>
</dbReference>
<dbReference type="GO" id="GO:0008320">
    <property type="term" value="F:protein transmembrane transporter activity"/>
    <property type="evidence" value="ECO:0007669"/>
    <property type="project" value="InterPro"/>
</dbReference>
<dbReference type="GO" id="GO:0030150">
    <property type="term" value="P:protein import into mitochondrial matrix"/>
    <property type="evidence" value="ECO:0000318"/>
    <property type="project" value="GO_Central"/>
</dbReference>
<dbReference type="InterPro" id="IPR005678">
    <property type="entry name" value="Tim17"/>
</dbReference>
<dbReference type="NCBIfam" id="TIGR00980">
    <property type="entry name" value="3a0801so1tim17"/>
    <property type="match status" value="1"/>
</dbReference>
<dbReference type="PANTHER" id="PTHR10485:SF0">
    <property type="entry name" value="AT05822P-RELATED"/>
    <property type="match status" value="1"/>
</dbReference>
<dbReference type="PANTHER" id="PTHR10485">
    <property type="entry name" value="MITOCHONDRIAL IMPORT INNER MEMBRANE TRANSLOCASE SUBUNIT TIM-17"/>
    <property type="match status" value="1"/>
</dbReference>
<dbReference type="Pfam" id="PF02466">
    <property type="entry name" value="Tim17"/>
    <property type="match status" value="1"/>
</dbReference>
<comment type="function">
    <text evidence="1">Essential component of the TIM23 complex, a complex that mediates the translocation of transit peptide-containing proteins across the mitochondrial inner membrane.</text>
</comment>
<comment type="subcellular location">
    <subcellularLocation>
        <location evidence="1">Mitochondrion inner membrane</location>
        <topology evidence="1">Multi-pass membrane protein</topology>
    </subcellularLocation>
</comment>
<comment type="similarity">
    <text evidence="4">Belongs to the Tim17/Tim22/Tim23 family.</text>
</comment>
<protein>
    <recommendedName>
        <fullName evidence="4">Probable mitochondrial import inner membrane translocase subunit tim-17B.1</fullName>
    </recommendedName>
</protein>
<evidence type="ECO:0000250" key="1"/>
<evidence type="ECO:0000255" key="2"/>
<evidence type="ECO:0000256" key="3">
    <source>
        <dbReference type="SAM" id="MobiDB-lite"/>
    </source>
</evidence>
<evidence type="ECO:0000305" key="4"/>
<evidence type="ECO:0000312" key="5">
    <source>
        <dbReference type="WormBase" id="E04A4.5"/>
    </source>
</evidence>